<proteinExistence type="inferred from homology"/>
<gene>
    <name evidence="1" type="primary">glgA</name>
    <name type="ordered locus">NT01EI_3677</name>
</gene>
<dbReference type="EC" id="2.4.1.21" evidence="1"/>
<dbReference type="EMBL" id="CP001600">
    <property type="protein sequence ID" value="ACR70805.1"/>
    <property type="molecule type" value="Genomic_DNA"/>
</dbReference>
<dbReference type="RefSeq" id="WP_015872843.1">
    <property type="nucleotide sequence ID" value="NZ_CP169062.1"/>
</dbReference>
<dbReference type="SMR" id="C5B965"/>
<dbReference type="STRING" id="67780.B6E78_10025"/>
<dbReference type="CAZy" id="GT5">
    <property type="family name" value="Glycosyltransferase Family 5"/>
</dbReference>
<dbReference type="GeneID" id="69540516"/>
<dbReference type="KEGG" id="eic:NT01EI_3677"/>
<dbReference type="PATRIC" id="fig|634503.3.peg.3280"/>
<dbReference type="HOGENOM" id="CLU_009583_18_4_6"/>
<dbReference type="OrthoDB" id="9808590at2"/>
<dbReference type="UniPathway" id="UPA00164"/>
<dbReference type="Proteomes" id="UP000001485">
    <property type="component" value="Chromosome"/>
</dbReference>
<dbReference type="GO" id="GO:0005829">
    <property type="term" value="C:cytosol"/>
    <property type="evidence" value="ECO:0007669"/>
    <property type="project" value="TreeGrafter"/>
</dbReference>
<dbReference type="GO" id="GO:0009011">
    <property type="term" value="F:alpha-1,4-glucan glucosyltransferase (ADP-glucose donor) activity"/>
    <property type="evidence" value="ECO:0007669"/>
    <property type="project" value="UniProtKB-UniRule"/>
</dbReference>
<dbReference type="GO" id="GO:0004373">
    <property type="term" value="F:alpha-1,4-glucan glucosyltransferase (UDP-glucose donor) activity"/>
    <property type="evidence" value="ECO:0007669"/>
    <property type="project" value="InterPro"/>
</dbReference>
<dbReference type="GO" id="GO:0005978">
    <property type="term" value="P:glycogen biosynthetic process"/>
    <property type="evidence" value="ECO:0007669"/>
    <property type="project" value="UniProtKB-UniRule"/>
</dbReference>
<dbReference type="CDD" id="cd03791">
    <property type="entry name" value="GT5_Glycogen_synthase_DULL1-like"/>
    <property type="match status" value="1"/>
</dbReference>
<dbReference type="FunFam" id="3.40.50.2000:FF:000011">
    <property type="entry name" value="Glycogen synthase"/>
    <property type="match status" value="1"/>
</dbReference>
<dbReference type="Gene3D" id="3.40.50.2000">
    <property type="entry name" value="Glycogen Phosphorylase B"/>
    <property type="match status" value="2"/>
</dbReference>
<dbReference type="HAMAP" id="MF_00484">
    <property type="entry name" value="Glycogen_synth"/>
    <property type="match status" value="1"/>
</dbReference>
<dbReference type="InterPro" id="IPR001296">
    <property type="entry name" value="Glyco_trans_1"/>
</dbReference>
<dbReference type="InterPro" id="IPR011835">
    <property type="entry name" value="GS/SS"/>
</dbReference>
<dbReference type="InterPro" id="IPR013534">
    <property type="entry name" value="Starch_synth_cat_dom"/>
</dbReference>
<dbReference type="NCBIfam" id="TIGR02095">
    <property type="entry name" value="glgA"/>
    <property type="match status" value="1"/>
</dbReference>
<dbReference type="NCBIfam" id="NF001899">
    <property type="entry name" value="PRK00654.1-2"/>
    <property type="match status" value="1"/>
</dbReference>
<dbReference type="PANTHER" id="PTHR45825:SF11">
    <property type="entry name" value="ALPHA AMYLASE DOMAIN-CONTAINING PROTEIN"/>
    <property type="match status" value="1"/>
</dbReference>
<dbReference type="PANTHER" id="PTHR45825">
    <property type="entry name" value="GRANULE-BOUND STARCH SYNTHASE 1, CHLOROPLASTIC/AMYLOPLASTIC"/>
    <property type="match status" value="1"/>
</dbReference>
<dbReference type="Pfam" id="PF08323">
    <property type="entry name" value="Glyco_transf_5"/>
    <property type="match status" value="1"/>
</dbReference>
<dbReference type="Pfam" id="PF00534">
    <property type="entry name" value="Glycos_transf_1"/>
    <property type="match status" value="1"/>
</dbReference>
<dbReference type="SUPFAM" id="SSF53756">
    <property type="entry name" value="UDP-Glycosyltransferase/glycogen phosphorylase"/>
    <property type="match status" value="1"/>
</dbReference>
<feature type="chain" id="PRO_1000206428" description="Glycogen synthase">
    <location>
        <begin position="1"/>
        <end position="477"/>
    </location>
</feature>
<feature type="binding site" evidence="1">
    <location>
        <position position="15"/>
    </location>
    <ligand>
        <name>ADP-alpha-D-glucose</name>
        <dbReference type="ChEBI" id="CHEBI:57498"/>
    </ligand>
</feature>
<evidence type="ECO:0000255" key="1">
    <source>
        <dbReference type="HAMAP-Rule" id="MF_00484"/>
    </source>
</evidence>
<protein>
    <recommendedName>
        <fullName evidence="1">Glycogen synthase</fullName>
        <ecNumber evidence="1">2.4.1.21</ecNumber>
    </recommendedName>
    <alternativeName>
        <fullName evidence="1">Starch [bacterial glycogen] synthase</fullName>
    </alternativeName>
</protein>
<keyword id="KW-0320">Glycogen biosynthesis</keyword>
<keyword id="KW-0328">Glycosyltransferase</keyword>
<keyword id="KW-0808">Transferase</keyword>
<organism>
    <name type="scientific">Edwardsiella ictaluri (strain 93-146)</name>
    <dbReference type="NCBI Taxonomy" id="634503"/>
    <lineage>
        <taxon>Bacteria</taxon>
        <taxon>Pseudomonadati</taxon>
        <taxon>Pseudomonadota</taxon>
        <taxon>Gammaproteobacteria</taxon>
        <taxon>Enterobacterales</taxon>
        <taxon>Hafniaceae</taxon>
        <taxon>Edwardsiella</taxon>
    </lineage>
</organism>
<sequence length="477" mass="52307">MYVLHVCSELFPLLKTGGLADVVGAMPSAQIAQGANVRVLVPGFPAICAGLPDSDEVATLDTFAGRVTLRYGVYRGVGVYLIDAPHLYQRPGSPYHDQWQNAYGDNHLRFALLGWIAAELACNCDPFWRPQVVHAHDWHAGLACAYLAARGNPARSVFTVHNLAYQGLFNARHLDELALPHHFFQIYGLEFHGQISFMKAGLYYADHVTTVSPTYAQEITHPEFAYGMEGLLQWRAREGTLSGILNGVDDTIWNPASDALIARTYRRETLRDKAENKLHLQTAMGLEVNADKPLFAVVSRLTDQKGLDLLLAALPTLLEGGAQLALLGAGDAQLQEAFLAVAAEHPGQVGVQIGYHEAFSHRIMAGADVIVVPSRFEPCGLTQLYGLKYGSLPLVRHTGGLADTVNDCALENLADGSATGFVFHDANAADLARAIRRALVLWGRPTLWRYVQRQAMAQSFGWDLAAEHYLALYRRLL</sequence>
<reference key="1">
    <citation type="submission" date="2009-03" db="EMBL/GenBank/DDBJ databases">
        <title>Complete genome sequence of Edwardsiella ictaluri 93-146.</title>
        <authorList>
            <person name="Williams M.L."/>
            <person name="Gillaspy A.F."/>
            <person name="Dyer D.W."/>
            <person name="Thune R.L."/>
            <person name="Waldbieser G.C."/>
            <person name="Schuster S.C."/>
            <person name="Gipson J."/>
            <person name="Zaitshik J."/>
            <person name="Landry C."/>
            <person name="Lawrence M.L."/>
        </authorList>
    </citation>
    <scope>NUCLEOTIDE SEQUENCE [LARGE SCALE GENOMIC DNA]</scope>
    <source>
        <strain>93-146</strain>
    </source>
</reference>
<comment type="function">
    <text evidence="1">Synthesizes alpha-1,4-glucan chains using ADP-glucose.</text>
</comment>
<comment type="catalytic activity">
    <reaction evidence="1">
        <text>[(1-&gt;4)-alpha-D-glucosyl](n) + ADP-alpha-D-glucose = [(1-&gt;4)-alpha-D-glucosyl](n+1) + ADP + H(+)</text>
        <dbReference type="Rhea" id="RHEA:18189"/>
        <dbReference type="Rhea" id="RHEA-COMP:9584"/>
        <dbReference type="Rhea" id="RHEA-COMP:9587"/>
        <dbReference type="ChEBI" id="CHEBI:15378"/>
        <dbReference type="ChEBI" id="CHEBI:15444"/>
        <dbReference type="ChEBI" id="CHEBI:57498"/>
        <dbReference type="ChEBI" id="CHEBI:456216"/>
        <dbReference type="EC" id="2.4.1.21"/>
    </reaction>
</comment>
<comment type="pathway">
    <text evidence="1">Glycan biosynthesis; glycogen biosynthesis.</text>
</comment>
<comment type="similarity">
    <text evidence="1">Belongs to the glycosyltransferase 1 family. Bacterial/plant glycogen synthase subfamily.</text>
</comment>
<name>GLGA_EDWI9</name>
<accession>C5B965</accession>